<comment type="function">
    <text evidence="1">High-affinity receptor for immunoglobulin epsilon/IgE. Mediates IgE effector functions in myeloid cells. Upon IgE binding and antigen/allergen cross-linking initiates signaling pathways that lead to myeloid cell activation and differentiation. On mast cells, basophils and eosinophils stimulates the secretion of vasoactive amines, lipid mediators and cytokines that contribute to inflammatory response, tissue remodeling and cytotoxicity against microbes. Triggers the immediate hypersensitivity response to allergens as a host defense mechanism against helminth parasites, pathogenic bacteria and venom toxicity. When dysregulated, it can elicit harmful life-threatening allergic and anaphylactic reactions.</text>
</comment>
<comment type="subunit">
    <text evidence="1">Tetramer of an alpha chain, a beta chain, and two disulfide linked gamma chains. Interacts with IGHE (via CH3 region).</text>
</comment>
<comment type="subcellular location">
    <subcellularLocation>
        <location evidence="1">Cell membrane</location>
        <topology evidence="2">Single-pass type I membrane protein</topology>
    </subcellularLocation>
</comment>
<comment type="subcellular location">
    <molecule>Isoform 2</molecule>
    <subcellularLocation>
        <location>Secreted</location>
    </subcellularLocation>
</comment>
<comment type="alternative products">
    <event type="alternative splicing"/>
    <isoform>
        <id>P12371-1</id>
        <name>1</name>
        <sequence type="displayed"/>
    </isoform>
    <isoform>
        <id>P12371-2</id>
        <name>2</name>
        <sequence type="described" ref="VSP_012760 VSP_012761"/>
    </isoform>
</comment>
<comment type="tissue specificity">
    <text evidence="4 5">Expressed in leukocytes and pinealocytes at night (at protein level).</text>
</comment>
<comment type="induction">
    <text evidence="4 5">Exhibits night/day variations with a 15-fold increased expression at night in the pineal gland. Up-regulation is due to a large degree to the release of norepinephrine from nerve terminals in the pineal gland and cAMP signaling pathway (at protein level).</text>
</comment>
<name>FCERA_RAT</name>
<proteinExistence type="evidence at protein level"/>
<protein>
    <recommendedName>
        <fullName>High affinity immunoglobulin epsilon receptor subunit alpha</fullName>
    </recommendedName>
    <alternativeName>
        <fullName>Fc-epsilon RI-alpha</fullName>
        <shortName>FcERI</shortName>
    </alternativeName>
    <alternativeName>
        <fullName>IgE Fc receptor subunit alpha</fullName>
    </alternativeName>
</protein>
<reference key="1">
    <citation type="journal article" date="1987" name="Biochemistry">
        <title>A cDNA presumptively coding for the alpha subunit of the receptor with high affinity for immunoglobulin E.</title>
        <authorList>
            <person name="Kinet J.-P."/>
            <person name="Metzger H."/>
            <person name="Hakimi J."/>
            <person name="Kochan J."/>
        </authorList>
    </citation>
    <scope>NUCLEOTIDE SEQUENCE [MRNA] (ISOFORM 1)</scope>
</reference>
<reference key="2">
    <citation type="submission" date="1988-03" db="EMBL/GenBank/DDBJ databases">
        <authorList>
            <person name="Kochan J."/>
        </authorList>
    </citation>
    <scope>SEQUENCE REVISION</scope>
</reference>
<reference key="3">
    <citation type="journal article" date="1988" name="Proc. Natl. Acad. Sci. U.S.A.">
        <title>Human and rat mast cell high-affinity immunoglobulin E receptors: characterization of putative alpha-chain gene products.</title>
        <authorList>
            <person name="Shimizu A."/>
            <person name="Tepler I."/>
            <person name="Benfey P.N."/>
            <person name="Berenstein E.H."/>
            <person name="Siraganian R.P."/>
            <person name="Leder P."/>
        </authorList>
    </citation>
    <scope>NUCLEOTIDE SEQUENCE [MRNA] (ISOFORM 1)</scope>
    <source>
        <tissue>Mast cell</tissue>
    </source>
</reference>
<reference key="4">
    <citation type="journal article" date="1988" name="Proc. Natl. Acad. Sci. U.S.A.">
        <title>cDNA heterogeneity suggests structural variants related to the high-affinity IgE receptor.</title>
        <authorList>
            <person name="Liu F.-T."/>
            <person name="Albrandt K."/>
            <person name="Robertson M.W."/>
        </authorList>
    </citation>
    <scope>NUCLEOTIDE SEQUENCE [MRNA] (ISOFORMS 1 AND 2)</scope>
</reference>
<reference key="5">
    <citation type="journal article" date="1989" name="J. Biol. Chem.">
        <title>The gene for the rat mast cell high affinity IgE receptor alpha chain. Structure and alternative mRNA splicing patterns.</title>
        <authorList>
            <person name="Tepler I."/>
            <person name="Shimizu A."/>
            <person name="Leder P."/>
        </authorList>
    </citation>
    <scope>NUCLEOTIDE SEQUENCE [MRNA] OF 1-16</scope>
    <scope>ALTERNATIVE SPLICING</scope>
</reference>
<reference key="6">
    <citation type="journal article" date="2007" name="J. Biol. Chem.">
        <title>Neural adrenergic/cyclic AMP regulation of the immunoglobulin E receptor alpha-subunit expression in the mammalian pinealocyte: a neuroendocrine/immune response link?</title>
        <authorList>
            <person name="Ganguly S."/>
            <person name="Grodzki C."/>
            <person name="Sugden D."/>
            <person name="Moller M."/>
            <person name="Odom S."/>
            <person name="Gaildrat P."/>
            <person name="Gery I."/>
            <person name="Siraganian R.P."/>
            <person name="Rivera J."/>
            <person name="Klein D.C."/>
        </authorList>
    </citation>
    <scope>TISSUE SPECIFICITY</scope>
    <scope>INDUCTION</scope>
</reference>
<reference key="7">
    <citation type="journal article" date="2009" name="J. Biol. Chem.">
        <title>Night/day changes in pineal expression of &gt;600 genes: central role of adrenergic/cAMP signaling.</title>
        <authorList>
            <person name="Bailey M.J."/>
            <person name="Coon S.L."/>
            <person name="Carter D.A."/>
            <person name="Humphries A."/>
            <person name="Kim J.S."/>
            <person name="Shi Q."/>
            <person name="Gaildrat P."/>
            <person name="Morin F."/>
            <person name="Ganguly S."/>
            <person name="Hogenesch J.B."/>
            <person name="Weller J.L."/>
            <person name="Rath M.F."/>
            <person name="Moller M."/>
            <person name="Baler R."/>
            <person name="Sugden D."/>
            <person name="Rangel Z.G."/>
            <person name="Munson P.J."/>
            <person name="Klein D.C."/>
        </authorList>
    </citation>
    <scope>TISSUE SPECIFICITY</scope>
    <scope>INDUCTION</scope>
</reference>
<organism>
    <name type="scientific">Rattus norvegicus</name>
    <name type="common">Rat</name>
    <dbReference type="NCBI Taxonomy" id="10116"/>
    <lineage>
        <taxon>Eukaryota</taxon>
        <taxon>Metazoa</taxon>
        <taxon>Chordata</taxon>
        <taxon>Craniata</taxon>
        <taxon>Vertebrata</taxon>
        <taxon>Euteleostomi</taxon>
        <taxon>Mammalia</taxon>
        <taxon>Eutheria</taxon>
        <taxon>Euarchontoglires</taxon>
        <taxon>Glires</taxon>
        <taxon>Rodentia</taxon>
        <taxon>Myomorpha</taxon>
        <taxon>Muroidea</taxon>
        <taxon>Muridae</taxon>
        <taxon>Murinae</taxon>
        <taxon>Rattus</taxon>
    </lineage>
</organism>
<keyword id="KW-0002">3D-structure</keyword>
<keyword id="KW-0025">Alternative splicing</keyword>
<keyword id="KW-1003">Cell membrane</keyword>
<keyword id="KW-1015">Disulfide bond</keyword>
<keyword id="KW-0325">Glycoprotein</keyword>
<keyword id="KW-0389">IgE-binding protein</keyword>
<keyword id="KW-0393">Immunoglobulin domain</keyword>
<keyword id="KW-0472">Membrane</keyword>
<keyword id="KW-0675">Receptor</keyword>
<keyword id="KW-1185">Reference proteome</keyword>
<keyword id="KW-0677">Repeat</keyword>
<keyword id="KW-0964">Secreted</keyword>
<keyword id="KW-0732">Signal</keyword>
<keyword id="KW-0812">Transmembrane</keyword>
<keyword id="KW-1133">Transmembrane helix</keyword>
<evidence type="ECO:0000250" key="1">
    <source>
        <dbReference type="UniProtKB" id="P12319"/>
    </source>
</evidence>
<evidence type="ECO:0000255" key="2"/>
<evidence type="ECO:0000255" key="3">
    <source>
        <dbReference type="PROSITE-ProRule" id="PRU00114"/>
    </source>
</evidence>
<evidence type="ECO:0000269" key="4">
    <source>
    </source>
</evidence>
<evidence type="ECO:0000269" key="5">
    <source>
    </source>
</evidence>
<evidence type="ECO:0000303" key="6">
    <source>
    </source>
</evidence>
<evidence type="ECO:0007829" key="7">
    <source>
        <dbReference type="PDB" id="8Y81"/>
    </source>
</evidence>
<accession>P12371</accession>
<accession>P12840</accession>
<dbReference type="EMBL" id="M17153">
    <property type="protein sequence ID" value="AAA42045.1"/>
    <property type="molecule type" value="mRNA"/>
</dbReference>
<dbReference type="EMBL" id="J03606">
    <property type="protein sequence ID" value="AAA41582.1"/>
    <property type="molecule type" value="mRNA"/>
</dbReference>
<dbReference type="EMBL" id="M21622">
    <property type="protein sequence ID" value="AAA41146.1"/>
    <property type="molecule type" value="mRNA"/>
</dbReference>
<dbReference type="EMBL" id="M21623">
    <property type="protein sequence ID" value="AAA41147.1"/>
    <property type="molecule type" value="mRNA"/>
</dbReference>
<dbReference type="PIR" id="C31327">
    <property type="entry name" value="A30154"/>
</dbReference>
<dbReference type="PIR" id="D31327">
    <property type="entry name" value="D31327"/>
</dbReference>
<dbReference type="RefSeq" id="NP_036856.1">
    <molecule id="P12371-1"/>
    <property type="nucleotide sequence ID" value="NM_012724.4"/>
</dbReference>
<dbReference type="PDB" id="8Y81">
    <property type="method" value="EM"/>
    <property type="resolution" value="2.89 A"/>
    <property type="chains" value="A=1-245"/>
</dbReference>
<dbReference type="PDB" id="8Y84">
    <property type="method" value="EM"/>
    <property type="resolution" value="2.98 A"/>
    <property type="chains" value="A=1-245"/>
</dbReference>
<dbReference type="PDB" id="8ZGS">
    <property type="method" value="EM"/>
    <property type="resolution" value="3.04 A"/>
    <property type="chains" value="A=1-245"/>
</dbReference>
<dbReference type="PDB" id="8ZGT">
    <property type="method" value="EM"/>
    <property type="resolution" value="2.96 A"/>
    <property type="chains" value="A=1-245"/>
</dbReference>
<dbReference type="PDBsum" id="8Y81"/>
<dbReference type="PDBsum" id="8Y84"/>
<dbReference type="PDBsum" id="8ZGS"/>
<dbReference type="PDBsum" id="8ZGT"/>
<dbReference type="EMDB" id="EMD-39029"/>
<dbReference type="EMDB" id="EMD-39032"/>
<dbReference type="EMDB" id="EMD-60089"/>
<dbReference type="EMDB" id="EMD-60090"/>
<dbReference type="SMR" id="P12371"/>
<dbReference type="FunCoup" id="P12371">
    <property type="interactions" value="22"/>
</dbReference>
<dbReference type="STRING" id="10116.ENSRNOP00000069343"/>
<dbReference type="GlyCosmos" id="P12371">
    <property type="glycosylation" value="7 sites, No reported glycans"/>
</dbReference>
<dbReference type="GlyGen" id="P12371">
    <property type="glycosylation" value="7 sites"/>
</dbReference>
<dbReference type="PhosphoSitePlus" id="P12371"/>
<dbReference type="PaxDb" id="10116-ENSRNOP00000054898"/>
<dbReference type="Ensembl" id="ENSRNOT00000104245.1">
    <molecule id="P12371-1"/>
    <property type="protein sequence ID" value="ENSRNOP00000092868.1"/>
    <property type="gene ID" value="ENSRNOG00000009177.8"/>
</dbReference>
<dbReference type="GeneID" id="25047"/>
<dbReference type="KEGG" id="rno:25047"/>
<dbReference type="AGR" id="RGD:2597"/>
<dbReference type="CTD" id="2205"/>
<dbReference type="RGD" id="2597">
    <property type="gene designation" value="Fcer1a"/>
</dbReference>
<dbReference type="eggNOG" id="ENOG502RTXR">
    <property type="taxonomic scope" value="Eukaryota"/>
</dbReference>
<dbReference type="GeneTree" id="ENSGT01050000244808"/>
<dbReference type="InParanoid" id="P12371"/>
<dbReference type="OMA" id="LIRCHSW"/>
<dbReference type="OrthoDB" id="8954737at2759"/>
<dbReference type="PhylomeDB" id="P12371"/>
<dbReference type="Reactome" id="R-RNO-2454202">
    <property type="pathway name" value="Fc epsilon receptor (FCERI) signaling"/>
</dbReference>
<dbReference type="Reactome" id="R-RNO-2730905">
    <property type="pathway name" value="Role of LAT2/NTAL/LAB on calcium mobilization"/>
</dbReference>
<dbReference type="Reactome" id="R-RNO-2871796">
    <property type="pathway name" value="FCERI mediated MAPK activation"/>
</dbReference>
<dbReference type="Reactome" id="R-RNO-2871809">
    <property type="pathway name" value="FCERI mediated Ca+2 mobilization"/>
</dbReference>
<dbReference type="Reactome" id="R-RNO-2871837">
    <property type="pathway name" value="FCERI mediated NF-kB activation"/>
</dbReference>
<dbReference type="PRO" id="PR:P12371"/>
<dbReference type="Proteomes" id="UP000002494">
    <property type="component" value="Chromosome 13"/>
</dbReference>
<dbReference type="GO" id="GO:0009986">
    <property type="term" value="C:cell surface"/>
    <property type="evidence" value="ECO:0000266"/>
    <property type="project" value="RGD"/>
</dbReference>
<dbReference type="GO" id="GO:0009897">
    <property type="term" value="C:external side of plasma membrane"/>
    <property type="evidence" value="ECO:0000266"/>
    <property type="project" value="RGD"/>
</dbReference>
<dbReference type="GO" id="GO:0005576">
    <property type="term" value="C:extracellular region"/>
    <property type="evidence" value="ECO:0007669"/>
    <property type="project" value="UniProtKB-SubCell"/>
</dbReference>
<dbReference type="GO" id="GO:0005886">
    <property type="term" value="C:plasma membrane"/>
    <property type="evidence" value="ECO:0000266"/>
    <property type="project" value="RGD"/>
</dbReference>
<dbReference type="GO" id="GO:0019768">
    <property type="term" value="F:high-affinity IgE receptor activity"/>
    <property type="evidence" value="ECO:0000266"/>
    <property type="project" value="RGD"/>
</dbReference>
<dbReference type="GO" id="GO:0019863">
    <property type="term" value="F:IgE binding"/>
    <property type="evidence" value="ECO:0000266"/>
    <property type="project" value="RGD"/>
</dbReference>
<dbReference type="GO" id="GO:0019767">
    <property type="term" value="F:IgE receptor activity"/>
    <property type="evidence" value="ECO:0000266"/>
    <property type="project" value="RGD"/>
</dbReference>
<dbReference type="GO" id="GO:0019722">
    <property type="term" value="P:calcium-mediated signaling"/>
    <property type="evidence" value="ECO:0000266"/>
    <property type="project" value="RGD"/>
</dbReference>
<dbReference type="GO" id="GO:0007166">
    <property type="term" value="P:cell surface receptor signaling pathway"/>
    <property type="evidence" value="ECO:0000266"/>
    <property type="project" value="RGD"/>
</dbReference>
<dbReference type="GO" id="GO:0043308">
    <property type="term" value="P:eosinophil degranulation"/>
    <property type="evidence" value="ECO:0000266"/>
    <property type="project" value="RGD"/>
</dbReference>
<dbReference type="GO" id="GO:0051649">
    <property type="term" value="P:establishment of localization in cell"/>
    <property type="evidence" value="ECO:0000266"/>
    <property type="project" value="RGD"/>
</dbReference>
<dbReference type="GO" id="GO:0006955">
    <property type="term" value="P:immune response"/>
    <property type="evidence" value="ECO:0000304"/>
    <property type="project" value="RGD"/>
</dbReference>
<dbReference type="GO" id="GO:0016064">
    <property type="term" value="P:immunoglobulin mediated immune response"/>
    <property type="evidence" value="ECO:0000318"/>
    <property type="project" value="GO_Central"/>
</dbReference>
<dbReference type="GO" id="GO:0019370">
    <property type="term" value="P:leukotriene biosynthetic process"/>
    <property type="evidence" value="ECO:0000266"/>
    <property type="project" value="RGD"/>
</dbReference>
<dbReference type="GO" id="GO:0043303">
    <property type="term" value="P:mast cell degranulation"/>
    <property type="evidence" value="ECO:0000266"/>
    <property type="project" value="RGD"/>
</dbReference>
<dbReference type="GO" id="GO:0050850">
    <property type="term" value="P:positive regulation of calcium-mediated signaling"/>
    <property type="evidence" value="ECO:0000266"/>
    <property type="project" value="RGD"/>
</dbReference>
<dbReference type="GO" id="GO:0032725">
    <property type="term" value="P:positive regulation of granulocyte macrophage colony-stimulating factor production"/>
    <property type="evidence" value="ECO:0000266"/>
    <property type="project" value="RGD"/>
</dbReference>
<dbReference type="GO" id="GO:0032752">
    <property type="term" value="P:positive regulation of interleukin-3 production"/>
    <property type="evidence" value="ECO:0000266"/>
    <property type="project" value="RGD"/>
</dbReference>
<dbReference type="GO" id="GO:0032765">
    <property type="term" value="P:positive regulation of mast cell cytokine production"/>
    <property type="evidence" value="ECO:0000266"/>
    <property type="project" value="RGD"/>
</dbReference>
<dbReference type="GO" id="GO:0043306">
    <property type="term" value="P:positive regulation of mast cell degranulation"/>
    <property type="evidence" value="ECO:0000266"/>
    <property type="project" value="RGD"/>
</dbReference>
<dbReference type="GO" id="GO:0001812">
    <property type="term" value="P:positive regulation of type I hypersensitivity"/>
    <property type="evidence" value="ECO:0000266"/>
    <property type="project" value="RGD"/>
</dbReference>
<dbReference type="GO" id="GO:0001820">
    <property type="term" value="P:serotonin secretion"/>
    <property type="evidence" value="ECO:0000266"/>
    <property type="project" value="RGD"/>
</dbReference>
<dbReference type="GO" id="GO:0007165">
    <property type="term" value="P:signal transduction"/>
    <property type="evidence" value="ECO:0000266"/>
    <property type="project" value="RGD"/>
</dbReference>
<dbReference type="GO" id="GO:0042092">
    <property type="term" value="P:type 2 immune response"/>
    <property type="evidence" value="ECO:0000266"/>
    <property type="project" value="RGD"/>
</dbReference>
<dbReference type="GO" id="GO:0016068">
    <property type="term" value="P:type I hypersensitivity"/>
    <property type="evidence" value="ECO:0000266"/>
    <property type="project" value="RGD"/>
</dbReference>
<dbReference type="CDD" id="cd05752">
    <property type="entry name" value="Ig1_FcgammaR_like"/>
    <property type="match status" value="1"/>
</dbReference>
<dbReference type="CDD" id="cd05753">
    <property type="entry name" value="Ig2_FcgammaR_like"/>
    <property type="match status" value="1"/>
</dbReference>
<dbReference type="FunFam" id="2.60.40.10:FF:000217">
    <property type="entry name" value="High affinity immunoglobulin gamma Fc receptor I"/>
    <property type="match status" value="1"/>
</dbReference>
<dbReference type="FunFam" id="2.60.40.10:FF:000356">
    <property type="entry name" value="Low affinity immunoglobulin gamma Fc region receptor III-A"/>
    <property type="match status" value="1"/>
</dbReference>
<dbReference type="Gene3D" id="2.60.40.10">
    <property type="entry name" value="Immunoglobulins"/>
    <property type="match status" value="2"/>
</dbReference>
<dbReference type="InterPro" id="IPR007110">
    <property type="entry name" value="Ig-like_dom"/>
</dbReference>
<dbReference type="InterPro" id="IPR036179">
    <property type="entry name" value="Ig-like_dom_sf"/>
</dbReference>
<dbReference type="InterPro" id="IPR013783">
    <property type="entry name" value="Ig-like_fold"/>
</dbReference>
<dbReference type="InterPro" id="IPR050488">
    <property type="entry name" value="Ig_Fc_receptor"/>
</dbReference>
<dbReference type="InterPro" id="IPR003599">
    <property type="entry name" value="Ig_sub"/>
</dbReference>
<dbReference type="PANTHER" id="PTHR11481:SF12">
    <property type="entry name" value="HIGH AFFINITY IMMUNOGLOBULIN EPSILON RECEPTOR SUBUNIT ALPHA"/>
    <property type="match status" value="1"/>
</dbReference>
<dbReference type="PANTHER" id="PTHR11481">
    <property type="entry name" value="IMMUNOGLOBULIN FC RECEPTOR"/>
    <property type="match status" value="1"/>
</dbReference>
<dbReference type="Pfam" id="PF13895">
    <property type="entry name" value="Ig_2"/>
    <property type="match status" value="1"/>
</dbReference>
<dbReference type="SMART" id="SM00409">
    <property type="entry name" value="IG"/>
    <property type="match status" value="2"/>
</dbReference>
<dbReference type="SUPFAM" id="SSF48726">
    <property type="entry name" value="Immunoglobulin"/>
    <property type="match status" value="2"/>
</dbReference>
<dbReference type="PROSITE" id="PS50835">
    <property type="entry name" value="IG_LIKE"/>
    <property type="match status" value="1"/>
</dbReference>
<feature type="signal peptide">
    <location>
        <begin position="1"/>
        <end position="23"/>
    </location>
</feature>
<feature type="chain" id="PRO_0000015163" description="High affinity immunoglobulin epsilon receptor subunit alpha">
    <location>
        <begin position="24"/>
        <end position="245"/>
    </location>
</feature>
<feature type="topological domain" description="Extracellular" evidence="2">
    <location>
        <begin position="24"/>
        <end position="204"/>
    </location>
</feature>
<feature type="transmembrane region" description="Helical" evidence="2">
    <location>
        <begin position="205"/>
        <end position="223"/>
    </location>
</feature>
<feature type="topological domain" description="Cytoplasmic" evidence="2">
    <location>
        <begin position="224"/>
        <end position="245"/>
    </location>
</feature>
<feature type="domain" description="Ig-like 1">
    <location>
        <begin position="28"/>
        <end position="103"/>
    </location>
</feature>
<feature type="domain" description="Ig-like 2">
    <location>
        <begin position="113"/>
        <end position="181"/>
    </location>
</feature>
<feature type="glycosylation site" description="N-linked (GlcNAc...) asparagine" evidence="2">
    <location>
        <position position="52"/>
    </location>
</feature>
<feature type="glycosylation site" description="N-linked (GlcNAc...) asparagine" evidence="2">
    <location>
        <position position="53"/>
    </location>
</feature>
<feature type="glycosylation site" description="N-linked (GlcNAc...) asparagine" evidence="2">
    <location>
        <position position="58"/>
    </location>
</feature>
<feature type="glycosylation site" description="N-linked (GlcNAc...) asparagine" evidence="2">
    <location>
        <position position="65"/>
    </location>
</feature>
<feature type="glycosylation site" description="N-linked (GlcNAc...) asparagine" evidence="2">
    <location>
        <position position="123"/>
    </location>
</feature>
<feature type="glycosylation site" description="N-linked (GlcNAc...) asparagine" evidence="2">
    <location>
        <position position="158"/>
    </location>
</feature>
<feature type="glycosylation site" description="N-linked (GlcNAc...) asparagine" evidence="2">
    <location>
        <position position="167"/>
    </location>
</feature>
<feature type="disulfide bond" evidence="3">
    <location>
        <begin position="49"/>
        <end position="91"/>
    </location>
</feature>
<feature type="disulfide bond" evidence="3">
    <location>
        <begin position="130"/>
        <end position="174"/>
    </location>
</feature>
<feature type="splice variant" id="VSP_012760" description="In isoform 2." evidence="6">
    <original>VIYYKDDIAFKYSYDSN</original>
    <variation>ITQLSIVGYNSFSHHWR</variation>
    <location>
        <begin position="141"/>
        <end position="157"/>
    </location>
</feature>
<feature type="splice variant" id="VSP_012761" description="In isoform 2." evidence="6">
    <location>
        <begin position="158"/>
        <end position="245"/>
    </location>
</feature>
<feature type="strand" evidence="7">
    <location>
        <begin position="31"/>
        <end position="34"/>
    </location>
</feature>
<feature type="strand" evidence="7">
    <location>
        <begin position="37"/>
        <end position="40"/>
    </location>
</feature>
<feature type="strand" evidence="7">
    <location>
        <begin position="45"/>
        <end position="50"/>
    </location>
</feature>
<feature type="strand" evidence="7">
    <location>
        <begin position="60"/>
        <end position="68"/>
    </location>
</feature>
<feature type="strand" evidence="7">
    <location>
        <begin position="73"/>
        <end position="80"/>
    </location>
</feature>
<feature type="helix" evidence="7">
    <location>
        <begin position="83"/>
        <end position="85"/>
    </location>
</feature>
<feature type="strand" evidence="7">
    <location>
        <begin position="87"/>
        <end position="93"/>
    </location>
</feature>
<feature type="strand" evidence="7">
    <location>
        <begin position="102"/>
        <end position="107"/>
    </location>
</feature>
<feature type="strand" evidence="7">
    <location>
        <begin position="110"/>
        <end position="116"/>
    </location>
</feature>
<feature type="strand" evidence="7">
    <location>
        <begin position="118"/>
        <end position="121"/>
    </location>
</feature>
<feature type="strand" evidence="7">
    <location>
        <begin position="126"/>
        <end position="132"/>
    </location>
</feature>
<feature type="strand" evidence="7">
    <location>
        <begin position="139"/>
        <end position="145"/>
    </location>
</feature>
<feature type="strand" evidence="7">
    <location>
        <begin position="148"/>
        <end position="155"/>
    </location>
</feature>
<feature type="strand" evidence="7">
    <location>
        <begin position="159"/>
        <end position="161"/>
    </location>
</feature>
<feature type="helix" evidence="7">
    <location>
        <begin position="166"/>
        <end position="168"/>
    </location>
</feature>
<feature type="strand" evidence="7">
    <location>
        <begin position="170"/>
        <end position="177"/>
    </location>
</feature>
<feature type="strand" evidence="7">
    <location>
        <begin position="182"/>
        <end position="184"/>
    </location>
</feature>
<feature type="strand" evidence="7">
    <location>
        <begin position="188"/>
        <end position="195"/>
    </location>
</feature>
<feature type="helix" evidence="7">
    <location>
        <begin position="201"/>
        <end position="205"/>
    </location>
</feature>
<feature type="helix" evidence="7">
    <location>
        <begin position="206"/>
        <end position="212"/>
    </location>
</feature>
<feature type="helix" evidence="7">
    <location>
        <begin position="214"/>
        <end position="230"/>
    </location>
</feature>
<feature type="helix" evidence="7">
    <location>
        <begin position="232"/>
        <end position="235"/>
    </location>
</feature>
<gene>
    <name type="primary">Fcer1a</name>
    <name type="synonym">Fce1a</name>
</gene>
<sequence length="245" mass="27793">MDTGGSARLCLALVLISLGVMLTATQKSVVSLDPPWIRILTGDKVTLICNGNNSSQMNSTKWIHNDSISNVKSSHWVIVSATIQDSGKYICQKQGFYKSKPVYLNVMQEWLLLQSSADVVLDNGSFDIRCRSWKKWKVHKVIYYKDDIAFKYSYDSNNISIRKATFNDSGSYHCTGYLNKVECKSDKFSIAVVKDYTIEYRWLQLIFPSLAVILFAVDTGLWFSTHKQFESILKIQKTGKGKKKG</sequence>